<sequence>MQDRKFSFRKYFLISVFLIFIVSGITYFYSTQMLEKSQKCVEDNLDAKVKLVDMEDFYFDLNECLNMDDFFIPRPDFLNENLNKNLVVDGLIKNKFLDENFFKDLWIKKENLFNVDIEKENEKLIDKILEISK</sequence>
<accession>O51073</accession>
<feature type="chain" id="PRO_0000174374" description="Uncharacterized protein BB_0044">
    <location>
        <begin position="1"/>
        <end position="133"/>
    </location>
</feature>
<feature type="transmembrane region" description="Helical" evidence="1">
    <location>
        <begin position="11"/>
        <end position="31"/>
    </location>
</feature>
<protein>
    <recommendedName>
        <fullName>Uncharacterized protein BB_0044</fullName>
    </recommendedName>
</protein>
<reference key="1">
    <citation type="journal article" date="1997" name="Nature">
        <title>Genomic sequence of a Lyme disease spirochaete, Borrelia burgdorferi.</title>
        <authorList>
            <person name="Fraser C.M."/>
            <person name="Casjens S."/>
            <person name="Huang W.M."/>
            <person name="Sutton G.G."/>
            <person name="Clayton R.A."/>
            <person name="Lathigra R."/>
            <person name="White O."/>
            <person name="Ketchum K.A."/>
            <person name="Dodson R.J."/>
            <person name="Hickey E.K."/>
            <person name="Gwinn M.L."/>
            <person name="Dougherty B.A."/>
            <person name="Tomb J.-F."/>
            <person name="Fleischmann R.D."/>
            <person name="Richardson D.L."/>
            <person name="Peterson J.D."/>
            <person name="Kerlavage A.R."/>
            <person name="Quackenbush J."/>
            <person name="Salzberg S.L."/>
            <person name="Hanson M."/>
            <person name="van Vugt R."/>
            <person name="Palmer N."/>
            <person name="Adams M.D."/>
            <person name="Gocayne J.D."/>
            <person name="Weidman J.F."/>
            <person name="Utterback T.R."/>
            <person name="Watthey L."/>
            <person name="McDonald L.A."/>
            <person name="Artiach P."/>
            <person name="Bowman C."/>
            <person name="Garland S.A."/>
            <person name="Fujii C."/>
            <person name="Cotton M.D."/>
            <person name="Horst K."/>
            <person name="Roberts K.M."/>
            <person name="Hatch B."/>
            <person name="Smith H.O."/>
            <person name="Venter J.C."/>
        </authorList>
    </citation>
    <scope>NUCLEOTIDE SEQUENCE [LARGE SCALE GENOMIC DNA]</scope>
    <source>
        <strain>ATCC 35210 / DSM 4680 / CIP 102532 / B31</strain>
    </source>
</reference>
<evidence type="ECO:0000255" key="1"/>
<evidence type="ECO:0000305" key="2"/>
<dbReference type="EMBL" id="AE000783">
    <property type="protein sequence ID" value="AAC66442.1"/>
    <property type="molecule type" value="Genomic_DNA"/>
</dbReference>
<dbReference type="PIR" id="D70105">
    <property type="entry name" value="D70105"/>
</dbReference>
<dbReference type="RefSeq" id="NP_212178.1">
    <property type="nucleotide sequence ID" value="NC_001318.1"/>
</dbReference>
<dbReference type="RefSeq" id="WP_002556649.1">
    <property type="nucleotide sequence ID" value="NC_001318.1"/>
</dbReference>
<dbReference type="SMR" id="O51073"/>
<dbReference type="STRING" id="224326.BB_0044"/>
<dbReference type="PaxDb" id="224326-BB_0044"/>
<dbReference type="EnsemblBacteria" id="AAC66442">
    <property type="protein sequence ID" value="AAC66442"/>
    <property type="gene ID" value="BB_0044"/>
</dbReference>
<dbReference type="KEGG" id="bbu:BB_0044"/>
<dbReference type="PATRIC" id="fig|224326.49.peg.442"/>
<dbReference type="HOGENOM" id="CLU_1955372_0_0_12"/>
<dbReference type="OrthoDB" id="351011at2"/>
<dbReference type="Proteomes" id="UP000001807">
    <property type="component" value="Chromosome"/>
</dbReference>
<dbReference type="GO" id="GO:0016020">
    <property type="term" value="C:membrane"/>
    <property type="evidence" value="ECO:0007669"/>
    <property type="project" value="UniProtKB-SubCell"/>
</dbReference>
<name>Y044_BORBU</name>
<organism>
    <name type="scientific">Borreliella burgdorferi (strain ATCC 35210 / DSM 4680 / CIP 102532 / B31)</name>
    <name type="common">Borrelia burgdorferi</name>
    <dbReference type="NCBI Taxonomy" id="224326"/>
    <lineage>
        <taxon>Bacteria</taxon>
        <taxon>Pseudomonadati</taxon>
        <taxon>Spirochaetota</taxon>
        <taxon>Spirochaetia</taxon>
        <taxon>Spirochaetales</taxon>
        <taxon>Borreliaceae</taxon>
        <taxon>Borreliella</taxon>
    </lineage>
</organism>
<comment type="subcellular location">
    <subcellularLocation>
        <location evidence="2">Membrane</location>
        <topology evidence="2">Single-pass membrane protein</topology>
    </subcellularLocation>
</comment>
<proteinExistence type="predicted"/>
<gene>
    <name type="ordered locus">BB_0044</name>
</gene>
<keyword id="KW-0472">Membrane</keyword>
<keyword id="KW-1185">Reference proteome</keyword>
<keyword id="KW-0812">Transmembrane</keyword>
<keyword id="KW-1133">Transmembrane helix</keyword>